<evidence type="ECO:0000255" key="1">
    <source>
        <dbReference type="HAMAP-Rule" id="MF_00984"/>
    </source>
</evidence>
<evidence type="ECO:0000256" key="2">
    <source>
        <dbReference type="SAM" id="MobiDB-lite"/>
    </source>
</evidence>
<proteinExistence type="inferred from homology"/>
<dbReference type="EMBL" id="AE014291">
    <property type="protein sequence ID" value="AAN30022.1"/>
    <property type="molecule type" value="Genomic_DNA"/>
</dbReference>
<dbReference type="EMBL" id="CP002997">
    <property type="protein sequence ID" value="AEM18440.1"/>
    <property type="molecule type" value="Genomic_DNA"/>
</dbReference>
<dbReference type="RefSeq" id="WP_002967690.1">
    <property type="nucleotide sequence ID" value="NZ_KN046804.1"/>
</dbReference>
<dbReference type="SMR" id="Q8G0J1"/>
<dbReference type="GeneID" id="97533641"/>
<dbReference type="KEGG" id="bms:BR1102"/>
<dbReference type="KEGG" id="bsi:BS1330_I1098"/>
<dbReference type="PATRIC" id="fig|204722.21.peg.2186"/>
<dbReference type="HOGENOM" id="CLU_078758_0_1_5"/>
<dbReference type="PhylomeDB" id="Q8G0J1"/>
<dbReference type="Proteomes" id="UP000007104">
    <property type="component" value="Chromosome I"/>
</dbReference>
<dbReference type="GO" id="GO:0009295">
    <property type="term" value="C:nucleoid"/>
    <property type="evidence" value="ECO:0007669"/>
    <property type="project" value="TreeGrafter"/>
</dbReference>
<dbReference type="GO" id="GO:0003697">
    <property type="term" value="F:single-stranded DNA binding"/>
    <property type="evidence" value="ECO:0007669"/>
    <property type="project" value="UniProtKB-UniRule"/>
</dbReference>
<dbReference type="GO" id="GO:0006310">
    <property type="term" value="P:DNA recombination"/>
    <property type="evidence" value="ECO:0007669"/>
    <property type="project" value="UniProtKB-UniRule"/>
</dbReference>
<dbReference type="GO" id="GO:0006281">
    <property type="term" value="P:DNA repair"/>
    <property type="evidence" value="ECO:0007669"/>
    <property type="project" value="UniProtKB-UniRule"/>
</dbReference>
<dbReference type="GO" id="GO:0006260">
    <property type="term" value="P:DNA replication"/>
    <property type="evidence" value="ECO:0007669"/>
    <property type="project" value="UniProtKB-UniRule"/>
</dbReference>
<dbReference type="CDD" id="cd04496">
    <property type="entry name" value="SSB_OBF"/>
    <property type="match status" value="1"/>
</dbReference>
<dbReference type="Gene3D" id="2.40.50.140">
    <property type="entry name" value="Nucleic acid-binding proteins"/>
    <property type="match status" value="1"/>
</dbReference>
<dbReference type="HAMAP" id="MF_00984">
    <property type="entry name" value="SSB"/>
    <property type="match status" value="1"/>
</dbReference>
<dbReference type="InterPro" id="IPR012340">
    <property type="entry name" value="NA-bd_OB-fold"/>
</dbReference>
<dbReference type="InterPro" id="IPR000424">
    <property type="entry name" value="Primosome_PriB/ssb"/>
</dbReference>
<dbReference type="InterPro" id="IPR011344">
    <property type="entry name" value="ssDNA-bd"/>
</dbReference>
<dbReference type="NCBIfam" id="TIGR00621">
    <property type="entry name" value="ssb"/>
    <property type="match status" value="1"/>
</dbReference>
<dbReference type="PANTHER" id="PTHR10302">
    <property type="entry name" value="SINGLE-STRANDED DNA-BINDING PROTEIN"/>
    <property type="match status" value="1"/>
</dbReference>
<dbReference type="PANTHER" id="PTHR10302:SF27">
    <property type="entry name" value="SINGLE-STRANDED DNA-BINDING PROTEIN"/>
    <property type="match status" value="1"/>
</dbReference>
<dbReference type="Pfam" id="PF00436">
    <property type="entry name" value="SSB"/>
    <property type="match status" value="1"/>
</dbReference>
<dbReference type="SUPFAM" id="SSF50249">
    <property type="entry name" value="Nucleic acid-binding proteins"/>
    <property type="match status" value="1"/>
</dbReference>
<dbReference type="PROSITE" id="PS50935">
    <property type="entry name" value="SSB"/>
    <property type="match status" value="1"/>
</dbReference>
<organism>
    <name type="scientific">Brucella suis biovar 1 (strain 1330)</name>
    <dbReference type="NCBI Taxonomy" id="204722"/>
    <lineage>
        <taxon>Bacteria</taxon>
        <taxon>Pseudomonadati</taxon>
        <taxon>Pseudomonadota</taxon>
        <taxon>Alphaproteobacteria</taxon>
        <taxon>Hyphomicrobiales</taxon>
        <taxon>Brucellaceae</taxon>
        <taxon>Brucella/Ochrobactrum group</taxon>
        <taxon>Brucella</taxon>
    </lineage>
</organism>
<reference key="1">
    <citation type="journal article" date="2002" name="Proc. Natl. Acad. Sci. U.S.A.">
        <title>The Brucella suis genome reveals fundamental similarities between animal and plant pathogens and symbionts.</title>
        <authorList>
            <person name="Paulsen I.T."/>
            <person name="Seshadri R."/>
            <person name="Nelson K.E."/>
            <person name="Eisen J.A."/>
            <person name="Heidelberg J.F."/>
            <person name="Read T.D."/>
            <person name="Dodson R.J."/>
            <person name="Umayam L.A."/>
            <person name="Brinkac L.M."/>
            <person name="Beanan M.J."/>
            <person name="Daugherty S.C."/>
            <person name="DeBoy R.T."/>
            <person name="Durkin A.S."/>
            <person name="Kolonay J.F."/>
            <person name="Madupu R."/>
            <person name="Nelson W.C."/>
            <person name="Ayodeji B."/>
            <person name="Kraul M."/>
            <person name="Shetty J."/>
            <person name="Malek J.A."/>
            <person name="Van Aken S.E."/>
            <person name="Riedmuller S."/>
            <person name="Tettelin H."/>
            <person name="Gill S.R."/>
            <person name="White O."/>
            <person name="Salzberg S.L."/>
            <person name="Hoover D.L."/>
            <person name="Lindler L.E."/>
            <person name="Halling S.M."/>
            <person name="Boyle S.M."/>
            <person name="Fraser C.M."/>
        </authorList>
    </citation>
    <scope>NUCLEOTIDE SEQUENCE [LARGE SCALE GENOMIC DNA]</scope>
    <source>
        <strain>1330</strain>
    </source>
</reference>
<reference key="2">
    <citation type="journal article" date="2011" name="J. Bacteriol.">
        <title>Revised genome sequence of Brucella suis 1330.</title>
        <authorList>
            <person name="Tae H."/>
            <person name="Shallom S."/>
            <person name="Settlage R."/>
            <person name="Preston D."/>
            <person name="Adams L.G."/>
            <person name="Garner H.R."/>
        </authorList>
    </citation>
    <scope>NUCLEOTIDE SEQUENCE [LARGE SCALE GENOMIC DNA]</scope>
    <source>
        <strain>1330</strain>
    </source>
</reference>
<protein>
    <recommendedName>
        <fullName evidence="1">Single-stranded DNA-binding protein</fullName>
        <shortName evidence="1">SSB</shortName>
    </recommendedName>
</protein>
<name>SSB_BRUSU</name>
<gene>
    <name type="primary">ssb</name>
    <name type="ordered locus">BR1102</name>
    <name type="ordered locus">BS1330_I1098</name>
</gene>
<accession>Q8G0J1</accession>
<accession>G0KA24</accession>
<sequence>MAGSVNKVILVGNLGADPEIRRLNSGDMVANLRIATSESWRDRQTGERKDRTEWHSVVIFNENLAKVAEQYLKKGAKVYIEGALQTRKWQDQNGNDRYSTEIVLQKFRGELQMLDSRSEGGEGRSFGGGGNRNQMSDYSGGGGDFGSSGPSSGSSGGFSRDLDDEIPF</sequence>
<keyword id="KW-0227">DNA damage</keyword>
<keyword id="KW-0233">DNA recombination</keyword>
<keyword id="KW-0234">DNA repair</keyword>
<keyword id="KW-0235">DNA replication</keyword>
<keyword id="KW-0238">DNA-binding</keyword>
<feature type="chain" id="PRO_0000096016" description="Single-stranded DNA-binding protein">
    <location>
        <begin position="1"/>
        <end position="168"/>
    </location>
</feature>
<feature type="domain" description="SSB" evidence="1">
    <location>
        <begin position="5"/>
        <end position="111"/>
    </location>
</feature>
<feature type="DNA-binding region" evidence="1">
    <location>
        <begin position="54"/>
        <end position="60"/>
    </location>
</feature>
<feature type="region of interest" description="Disordered" evidence="2">
    <location>
        <begin position="113"/>
        <end position="168"/>
    </location>
</feature>
<feature type="short sequence motif" description="Important for interaction with partner proteins" evidence="1">
    <location>
        <begin position="163"/>
        <end position="168"/>
    </location>
</feature>
<feature type="compositionally biased region" description="Low complexity" evidence="2">
    <location>
        <begin position="147"/>
        <end position="159"/>
    </location>
</feature>
<comment type="function">
    <text evidence="1">Plays an important role in DNA replication, recombination and repair. Binds to ssDNA and to an array of partner proteins to recruit them to their sites of action during DNA metabolism.</text>
</comment>
<comment type="subunit">
    <text evidence="1">Homotetramer.</text>
</comment>